<reference key="1">
    <citation type="journal article" date="2006" name="J. Bacteriol.">
        <title>Comparison of the genome sequence of the poultry pathogen Bordetella avium with those of B. bronchiseptica, B. pertussis, and B. parapertussis reveals extensive diversity in surface structures associated with host interaction.</title>
        <authorList>
            <person name="Sebaihia M."/>
            <person name="Preston A."/>
            <person name="Maskell D.J."/>
            <person name="Kuzmiak H."/>
            <person name="Connell T.D."/>
            <person name="King N.D."/>
            <person name="Orndorff P.E."/>
            <person name="Miyamoto D.M."/>
            <person name="Thomson N.R."/>
            <person name="Harris D."/>
            <person name="Goble A."/>
            <person name="Lord A."/>
            <person name="Murphy L."/>
            <person name="Quail M.A."/>
            <person name="Rutter S."/>
            <person name="Squares R."/>
            <person name="Squares S."/>
            <person name="Woodward J."/>
            <person name="Parkhill J."/>
            <person name="Temple L.M."/>
        </authorList>
    </citation>
    <scope>NUCLEOTIDE SEQUENCE [LARGE SCALE GENOMIC DNA]</scope>
    <source>
        <strain>197N</strain>
    </source>
</reference>
<dbReference type="EMBL" id="AM167904">
    <property type="protein sequence ID" value="CAJ49111.1"/>
    <property type="molecule type" value="Genomic_DNA"/>
</dbReference>
<dbReference type="RefSeq" id="WP_012417175.1">
    <property type="nucleotide sequence ID" value="NC_010645.1"/>
</dbReference>
<dbReference type="SMR" id="Q2L255"/>
<dbReference type="STRING" id="360910.BAV1498"/>
<dbReference type="GeneID" id="92935437"/>
<dbReference type="KEGG" id="bav:BAV1498"/>
<dbReference type="eggNOG" id="COG1219">
    <property type="taxonomic scope" value="Bacteria"/>
</dbReference>
<dbReference type="HOGENOM" id="CLU_014218_8_2_4"/>
<dbReference type="OrthoDB" id="9804062at2"/>
<dbReference type="Proteomes" id="UP000001977">
    <property type="component" value="Chromosome"/>
</dbReference>
<dbReference type="GO" id="GO:0009376">
    <property type="term" value="C:HslUV protease complex"/>
    <property type="evidence" value="ECO:0007669"/>
    <property type="project" value="TreeGrafter"/>
</dbReference>
<dbReference type="GO" id="GO:0005524">
    <property type="term" value="F:ATP binding"/>
    <property type="evidence" value="ECO:0007669"/>
    <property type="project" value="UniProtKB-UniRule"/>
</dbReference>
<dbReference type="GO" id="GO:0016887">
    <property type="term" value="F:ATP hydrolysis activity"/>
    <property type="evidence" value="ECO:0007669"/>
    <property type="project" value="InterPro"/>
</dbReference>
<dbReference type="GO" id="GO:0140662">
    <property type="term" value="F:ATP-dependent protein folding chaperone"/>
    <property type="evidence" value="ECO:0007669"/>
    <property type="project" value="InterPro"/>
</dbReference>
<dbReference type="GO" id="GO:0046983">
    <property type="term" value="F:protein dimerization activity"/>
    <property type="evidence" value="ECO:0007669"/>
    <property type="project" value="InterPro"/>
</dbReference>
<dbReference type="GO" id="GO:0051082">
    <property type="term" value="F:unfolded protein binding"/>
    <property type="evidence" value="ECO:0007669"/>
    <property type="project" value="UniProtKB-UniRule"/>
</dbReference>
<dbReference type="GO" id="GO:0008270">
    <property type="term" value="F:zinc ion binding"/>
    <property type="evidence" value="ECO:0007669"/>
    <property type="project" value="InterPro"/>
</dbReference>
<dbReference type="GO" id="GO:0051301">
    <property type="term" value="P:cell division"/>
    <property type="evidence" value="ECO:0007669"/>
    <property type="project" value="TreeGrafter"/>
</dbReference>
<dbReference type="GO" id="GO:0051603">
    <property type="term" value="P:proteolysis involved in protein catabolic process"/>
    <property type="evidence" value="ECO:0007669"/>
    <property type="project" value="TreeGrafter"/>
</dbReference>
<dbReference type="CDD" id="cd19497">
    <property type="entry name" value="RecA-like_ClpX"/>
    <property type="match status" value="1"/>
</dbReference>
<dbReference type="FunFam" id="1.10.8.60:FF:000002">
    <property type="entry name" value="ATP-dependent Clp protease ATP-binding subunit ClpX"/>
    <property type="match status" value="1"/>
</dbReference>
<dbReference type="FunFam" id="3.40.50.300:FF:000005">
    <property type="entry name" value="ATP-dependent Clp protease ATP-binding subunit ClpX"/>
    <property type="match status" value="1"/>
</dbReference>
<dbReference type="Gene3D" id="1.10.8.60">
    <property type="match status" value="1"/>
</dbReference>
<dbReference type="Gene3D" id="6.20.220.10">
    <property type="entry name" value="ClpX chaperone, C4-type zinc finger domain"/>
    <property type="match status" value="1"/>
</dbReference>
<dbReference type="Gene3D" id="3.40.50.300">
    <property type="entry name" value="P-loop containing nucleotide triphosphate hydrolases"/>
    <property type="match status" value="1"/>
</dbReference>
<dbReference type="HAMAP" id="MF_00175">
    <property type="entry name" value="ClpX"/>
    <property type="match status" value="1"/>
</dbReference>
<dbReference type="InterPro" id="IPR003593">
    <property type="entry name" value="AAA+_ATPase"/>
</dbReference>
<dbReference type="InterPro" id="IPR050052">
    <property type="entry name" value="ATP-dep_Clp_protease_ClpX"/>
</dbReference>
<dbReference type="InterPro" id="IPR003959">
    <property type="entry name" value="ATPase_AAA_core"/>
</dbReference>
<dbReference type="InterPro" id="IPR019489">
    <property type="entry name" value="Clp_ATPase_C"/>
</dbReference>
<dbReference type="InterPro" id="IPR004487">
    <property type="entry name" value="Clp_protease_ATP-bd_su_ClpX"/>
</dbReference>
<dbReference type="InterPro" id="IPR046425">
    <property type="entry name" value="ClpX_bact"/>
</dbReference>
<dbReference type="InterPro" id="IPR027417">
    <property type="entry name" value="P-loop_NTPase"/>
</dbReference>
<dbReference type="InterPro" id="IPR010603">
    <property type="entry name" value="Znf_CppX_C4"/>
</dbReference>
<dbReference type="InterPro" id="IPR038366">
    <property type="entry name" value="Znf_CppX_C4_sf"/>
</dbReference>
<dbReference type="NCBIfam" id="TIGR00382">
    <property type="entry name" value="clpX"/>
    <property type="match status" value="1"/>
</dbReference>
<dbReference type="NCBIfam" id="NF003745">
    <property type="entry name" value="PRK05342.1"/>
    <property type="match status" value="1"/>
</dbReference>
<dbReference type="PANTHER" id="PTHR48102:SF7">
    <property type="entry name" value="ATP-DEPENDENT CLP PROTEASE ATP-BINDING SUBUNIT CLPX-LIKE, MITOCHONDRIAL"/>
    <property type="match status" value="1"/>
</dbReference>
<dbReference type="PANTHER" id="PTHR48102">
    <property type="entry name" value="ATP-DEPENDENT CLP PROTEASE ATP-BINDING SUBUNIT CLPX-LIKE, MITOCHONDRIAL-RELATED"/>
    <property type="match status" value="1"/>
</dbReference>
<dbReference type="Pfam" id="PF07724">
    <property type="entry name" value="AAA_2"/>
    <property type="match status" value="1"/>
</dbReference>
<dbReference type="Pfam" id="PF10431">
    <property type="entry name" value="ClpB_D2-small"/>
    <property type="match status" value="1"/>
</dbReference>
<dbReference type="Pfam" id="PF06689">
    <property type="entry name" value="zf-C4_ClpX"/>
    <property type="match status" value="1"/>
</dbReference>
<dbReference type="SMART" id="SM00382">
    <property type="entry name" value="AAA"/>
    <property type="match status" value="1"/>
</dbReference>
<dbReference type="SMART" id="SM01086">
    <property type="entry name" value="ClpB_D2-small"/>
    <property type="match status" value="1"/>
</dbReference>
<dbReference type="SMART" id="SM00994">
    <property type="entry name" value="zf-C4_ClpX"/>
    <property type="match status" value="1"/>
</dbReference>
<dbReference type="SUPFAM" id="SSF57716">
    <property type="entry name" value="Glucocorticoid receptor-like (DNA-binding domain)"/>
    <property type="match status" value="1"/>
</dbReference>
<dbReference type="SUPFAM" id="SSF52540">
    <property type="entry name" value="P-loop containing nucleoside triphosphate hydrolases"/>
    <property type="match status" value="1"/>
</dbReference>
<dbReference type="PROSITE" id="PS51902">
    <property type="entry name" value="CLPX_ZB"/>
    <property type="match status" value="1"/>
</dbReference>
<organism>
    <name type="scientific">Bordetella avium (strain 197N)</name>
    <dbReference type="NCBI Taxonomy" id="360910"/>
    <lineage>
        <taxon>Bacteria</taxon>
        <taxon>Pseudomonadati</taxon>
        <taxon>Pseudomonadota</taxon>
        <taxon>Betaproteobacteria</taxon>
        <taxon>Burkholderiales</taxon>
        <taxon>Alcaligenaceae</taxon>
        <taxon>Bordetella</taxon>
    </lineage>
</organism>
<comment type="function">
    <text evidence="1">ATP-dependent specificity component of the Clp protease. It directs the protease to specific substrates. Can perform chaperone functions in the absence of ClpP.</text>
</comment>
<comment type="subunit">
    <text evidence="1">Component of the ClpX-ClpP complex. Forms a hexameric ring that, in the presence of ATP, binds to fourteen ClpP subunits assembled into a disk-like structure with a central cavity, resembling the structure of eukaryotic proteasomes.</text>
</comment>
<comment type="similarity">
    <text evidence="1">Belongs to the ClpX chaperone family.</text>
</comment>
<accession>Q2L255</accession>
<feature type="chain" id="PRO_1000024520" description="ATP-dependent Clp protease ATP-binding subunit ClpX">
    <location>
        <begin position="1"/>
        <end position="432"/>
    </location>
</feature>
<feature type="domain" description="ClpX-type ZB" evidence="2">
    <location>
        <begin position="3"/>
        <end position="56"/>
    </location>
</feature>
<feature type="binding site" evidence="2">
    <location>
        <position position="15"/>
    </location>
    <ligand>
        <name>Zn(2+)</name>
        <dbReference type="ChEBI" id="CHEBI:29105"/>
    </ligand>
</feature>
<feature type="binding site" evidence="2">
    <location>
        <position position="18"/>
    </location>
    <ligand>
        <name>Zn(2+)</name>
        <dbReference type="ChEBI" id="CHEBI:29105"/>
    </ligand>
</feature>
<feature type="binding site" evidence="2">
    <location>
        <position position="37"/>
    </location>
    <ligand>
        <name>Zn(2+)</name>
        <dbReference type="ChEBI" id="CHEBI:29105"/>
    </ligand>
</feature>
<feature type="binding site" evidence="2">
    <location>
        <position position="40"/>
    </location>
    <ligand>
        <name>Zn(2+)</name>
        <dbReference type="ChEBI" id="CHEBI:29105"/>
    </ligand>
</feature>
<feature type="binding site" evidence="1">
    <location>
        <begin position="121"/>
        <end position="128"/>
    </location>
    <ligand>
        <name>ATP</name>
        <dbReference type="ChEBI" id="CHEBI:30616"/>
    </ligand>
</feature>
<name>CLPX_BORA1</name>
<sequence length="432" mass="47042">MPEKKGSADAKVLHCSFCNKSQHEVRKLIAGPSVFICDECIDLCNDIIREEAQATARAAIRSELPTPVEIKSFLDQYVIGQTGPKRMLAVAVYNHYKRIRHGEIKGDEVELSKSNIMLIGPTGSGKTLLAQTLARMLNVPFVMADATTLTEAGYVGEDVENIIQKLLQNCNYDVEKAQRAIIYIDEIDKISRKSDNPSITRDVSGEGVQQALLKLIEGTVASVPPQGGRKHPNQDFVQVDTTNILFIVGGAFDGLEKVIRDRTEKSGIGFSAAVRAKSERGVGELFGEAEPEDLIKFGLIPELVGRLPVVATLDELDEAALVQILTEPKNALIKQFQKLFAMESAELDIRPDALHAIARKALQRKTGARGLRSILESALLDTMYDLPTAGNIRRVVVDANVIEGDGKPLLIYADEVAGSDESAQGEVRDAAA</sequence>
<gene>
    <name evidence="1" type="primary">clpX</name>
    <name type="ordered locus">BAV1498</name>
</gene>
<proteinExistence type="inferred from homology"/>
<evidence type="ECO:0000255" key="1">
    <source>
        <dbReference type="HAMAP-Rule" id="MF_00175"/>
    </source>
</evidence>
<evidence type="ECO:0000255" key="2">
    <source>
        <dbReference type="PROSITE-ProRule" id="PRU01250"/>
    </source>
</evidence>
<protein>
    <recommendedName>
        <fullName evidence="1">ATP-dependent Clp protease ATP-binding subunit ClpX</fullName>
    </recommendedName>
</protein>
<keyword id="KW-0067">ATP-binding</keyword>
<keyword id="KW-0143">Chaperone</keyword>
<keyword id="KW-0479">Metal-binding</keyword>
<keyword id="KW-0547">Nucleotide-binding</keyword>
<keyword id="KW-1185">Reference proteome</keyword>
<keyword id="KW-0862">Zinc</keyword>